<accession>A4SKI2</accession>
<evidence type="ECO:0000255" key="1">
    <source>
        <dbReference type="HAMAP-Rule" id="MF_01848"/>
    </source>
</evidence>
<evidence type="ECO:0000305" key="2"/>
<protein>
    <recommendedName>
        <fullName evidence="1">Ribosomal RNA large subunit methyltransferase F</fullName>
        <ecNumber evidence="1">2.1.1.181</ecNumber>
    </recommendedName>
    <alternativeName>
        <fullName evidence="1">23S rRNA mA1618 methyltransferase</fullName>
    </alternativeName>
    <alternativeName>
        <fullName evidence="1">rRNA adenine N-6-methyltransferase</fullName>
    </alternativeName>
</protein>
<gene>
    <name evidence="1" type="primary">rlmF</name>
    <name type="ordered locus">ASA_1298</name>
</gene>
<reference key="1">
    <citation type="journal article" date="2008" name="BMC Genomics">
        <title>The genome of Aeromonas salmonicida subsp. salmonicida A449: insights into the evolution of a fish pathogen.</title>
        <authorList>
            <person name="Reith M.E."/>
            <person name="Singh R.K."/>
            <person name="Curtis B."/>
            <person name="Boyd J.M."/>
            <person name="Bouevitch A."/>
            <person name="Kimball J."/>
            <person name="Munholland J."/>
            <person name="Murphy C."/>
            <person name="Sarty D."/>
            <person name="Williams J."/>
            <person name="Nash J.H."/>
            <person name="Johnson S.C."/>
            <person name="Brown L.L."/>
        </authorList>
    </citation>
    <scope>NUCLEOTIDE SEQUENCE [LARGE SCALE GENOMIC DNA]</scope>
    <source>
        <strain>A449</strain>
    </source>
</reference>
<keyword id="KW-0963">Cytoplasm</keyword>
<keyword id="KW-0489">Methyltransferase</keyword>
<keyword id="KW-0698">rRNA processing</keyword>
<keyword id="KW-0949">S-adenosyl-L-methionine</keyword>
<keyword id="KW-0808">Transferase</keyword>
<organism>
    <name type="scientific">Aeromonas salmonicida (strain A449)</name>
    <dbReference type="NCBI Taxonomy" id="382245"/>
    <lineage>
        <taxon>Bacteria</taxon>
        <taxon>Pseudomonadati</taxon>
        <taxon>Pseudomonadota</taxon>
        <taxon>Gammaproteobacteria</taxon>
        <taxon>Aeromonadales</taxon>
        <taxon>Aeromonadaceae</taxon>
        <taxon>Aeromonas</taxon>
    </lineage>
</organism>
<name>RLMF_AERS4</name>
<dbReference type="EC" id="2.1.1.181" evidence="1"/>
<dbReference type="EMBL" id="CP000644">
    <property type="protein sequence ID" value="ABO89404.1"/>
    <property type="status" value="ALT_INIT"/>
    <property type="molecule type" value="Genomic_DNA"/>
</dbReference>
<dbReference type="RefSeq" id="WP_005316748.1">
    <property type="nucleotide sequence ID" value="NC_009348.1"/>
</dbReference>
<dbReference type="SMR" id="A4SKI2"/>
<dbReference type="STRING" id="29491.GCA_000820065_01100"/>
<dbReference type="KEGG" id="asa:ASA_1298"/>
<dbReference type="PATRIC" id="fig|382245.13.peg.1297"/>
<dbReference type="eggNOG" id="COG3129">
    <property type="taxonomic scope" value="Bacteria"/>
</dbReference>
<dbReference type="HOGENOM" id="CLU_027534_3_0_6"/>
<dbReference type="Proteomes" id="UP000000225">
    <property type="component" value="Chromosome"/>
</dbReference>
<dbReference type="GO" id="GO:0005737">
    <property type="term" value="C:cytoplasm"/>
    <property type="evidence" value="ECO:0007669"/>
    <property type="project" value="UniProtKB-SubCell"/>
</dbReference>
<dbReference type="GO" id="GO:0052907">
    <property type="term" value="F:23S rRNA (adenine(1618)-N(6))-methyltransferase activity"/>
    <property type="evidence" value="ECO:0007669"/>
    <property type="project" value="UniProtKB-EC"/>
</dbReference>
<dbReference type="GO" id="GO:0070475">
    <property type="term" value="P:rRNA base methylation"/>
    <property type="evidence" value="ECO:0007669"/>
    <property type="project" value="TreeGrafter"/>
</dbReference>
<dbReference type="CDD" id="cd02440">
    <property type="entry name" value="AdoMet_MTases"/>
    <property type="match status" value="1"/>
</dbReference>
<dbReference type="Gene3D" id="3.40.50.150">
    <property type="entry name" value="Vaccinia Virus protein VP39"/>
    <property type="match status" value="1"/>
</dbReference>
<dbReference type="HAMAP" id="MF_01848">
    <property type="entry name" value="23SrRNA_methyltr_F"/>
    <property type="match status" value="1"/>
</dbReference>
<dbReference type="InterPro" id="IPR010286">
    <property type="entry name" value="METTL16/RlmF"/>
</dbReference>
<dbReference type="InterPro" id="IPR016909">
    <property type="entry name" value="rRNA_lsu_MeTfrase_F"/>
</dbReference>
<dbReference type="InterPro" id="IPR029063">
    <property type="entry name" value="SAM-dependent_MTases_sf"/>
</dbReference>
<dbReference type="NCBIfam" id="NF008725">
    <property type="entry name" value="PRK11727.1"/>
    <property type="match status" value="1"/>
</dbReference>
<dbReference type="PANTHER" id="PTHR13393:SF0">
    <property type="entry name" value="RNA N6-ADENOSINE-METHYLTRANSFERASE METTL16"/>
    <property type="match status" value="1"/>
</dbReference>
<dbReference type="PANTHER" id="PTHR13393">
    <property type="entry name" value="SAM-DEPENDENT METHYLTRANSFERASE"/>
    <property type="match status" value="1"/>
</dbReference>
<dbReference type="Pfam" id="PF05971">
    <property type="entry name" value="Methyltransf_10"/>
    <property type="match status" value="1"/>
</dbReference>
<dbReference type="PIRSF" id="PIRSF029038">
    <property type="entry name" value="Mtase_YbiN_prd"/>
    <property type="match status" value="1"/>
</dbReference>
<dbReference type="SUPFAM" id="SSF53335">
    <property type="entry name" value="S-adenosyl-L-methionine-dependent methyltransferases"/>
    <property type="match status" value="1"/>
</dbReference>
<sequence>MKTHSDRKSGLHPRNRHQAPYDFDALCLRTPELRPLVFVNEHGTQTLDFADPAAVKALNKALLALHYGIAHWDLPAGYLCPPIPGRVDYLHRVADLLAESAGCVPTGKGVRVLDIGVGANCIYPLLGAREYGWRFVGSDIDPVSVKAAALLAKSNGLGGQIECRHQGNAKHVFRGIISPQERFALTLCNPPFHGSLDEASKGSERKLGKTVQGQPVLNFGGQKAELWCEGGEAGFLATMIVQSKEFAAQCLWFSSLVSKKENLPAAKKALAQVGARQVRVIDMAQGNKVSRILAWSFLDEVACGQWWQPALRGGV</sequence>
<feature type="chain" id="PRO_0000349894" description="Ribosomal RNA large subunit methyltransferase F">
    <location>
        <begin position="1"/>
        <end position="315"/>
    </location>
</feature>
<comment type="function">
    <text evidence="1">Specifically methylates the adenine in position 1618 of 23S rRNA.</text>
</comment>
<comment type="catalytic activity">
    <reaction evidence="1">
        <text>adenosine(1618) in 23S rRNA + S-adenosyl-L-methionine = N(6)-methyladenosine(1618) in 23S rRNA + S-adenosyl-L-homocysteine + H(+)</text>
        <dbReference type="Rhea" id="RHEA:16497"/>
        <dbReference type="Rhea" id="RHEA-COMP:10229"/>
        <dbReference type="Rhea" id="RHEA-COMP:10231"/>
        <dbReference type="ChEBI" id="CHEBI:15378"/>
        <dbReference type="ChEBI" id="CHEBI:57856"/>
        <dbReference type="ChEBI" id="CHEBI:59789"/>
        <dbReference type="ChEBI" id="CHEBI:74411"/>
        <dbReference type="ChEBI" id="CHEBI:74449"/>
        <dbReference type="EC" id="2.1.1.181"/>
    </reaction>
</comment>
<comment type="subcellular location">
    <subcellularLocation>
        <location evidence="1">Cytoplasm</location>
    </subcellularLocation>
</comment>
<comment type="similarity">
    <text evidence="1">Belongs to the methyltransferase superfamily. METTL16/RlmF family.</text>
</comment>
<comment type="sequence caution" evidence="2">
    <conflict type="erroneous initiation">
        <sequence resource="EMBL-CDS" id="ABO89404"/>
    </conflict>
    <text>Extended N-terminus.</text>
</comment>
<proteinExistence type="inferred from homology"/>